<organism>
    <name type="scientific">Escherichia coli (strain K12)</name>
    <dbReference type="NCBI Taxonomy" id="83333"/>
    <lineage>
        <taxon>Bacteria</taxon>
        <taxon>Pseudomonadati</taxon>
        <taxon>Pseudomonadota</taxon>
        <taxon>Gammaproteobacteria</taxon>
        <taxon>Enterobacterales</taxon>
        <taxon>Enterobacteriaceae</taxon>
        <taxon>Escherichia</taxon>
    </lineage>
</organism>
<protein>
    <recommendedName>
        <fullName>rpoE leader peptide</fullName>
    </recommendedName>
</protein>
<sequence>MIRLQHDKQKQMRYGTLQKRDTLTLCLLKLQLMEWRFDSAWKFGLGRLYLG</sequence>
<dbReference type="EMBL" id="U00096">
    <property type="protein sequence ID" value="AYC08234.1"/>
    <property type="molecule type" value="Genomic_DNA"/>
</dbReference>
<dbReference type="RefSeq" id="WP_001303621.1">
    <property type="nucleotide sequence ID" value="NZ_STEB01000011.1"/>
</dbReference>
<dbReference type="FunCoup" id="P0DPC7">
    <property type="interactions" value="5"/>
</dbReference>
<dbReference type="EnsemblBacteria" id="AYC08234">
    <property type="protein sequence ID" value="AYC08234"/>
    <property type="gene ID" value="b4725"/>
</dbReference>
<dbReference type="GeneID" id="93774517"/>
<dbReference type="KEGG" id="ecoc:C3026_14255"/>
<dbReference type="InParanoid" id="P0DPC7"/>
<dbReference type="BioCyc" id="EcoCyc:MONOMER0-4396"/>
<dbReference type="PRO" id="PR:P0DPC7"/>
<dbReference type="Proteomes" id="UP000000625">
    <property type="component" value="Chromosome"/>
</dbReference>
<dbReference type="GO" id="GO:0006417">
    <property type="term" value="P:regulation of translation"/>
    <property type="evidence" value="ECO:0007669"/>
    <property type="project" value="UniProtKB-KW"/>
</dbReference>
<dbReference type="InterPro" id="IPR049933">
    <property type="entry name" value="RseD"/>
</dbReference>
<dbReference type="NCBIfam" id="NF033697">
    <property type="entry name" value="leader_RseD"/>
    <property type="match status" value="1"/>
</dbReference>
<reference key="1">
    <citation type="journal article" date="1997" name="Science">
        <title>The complete genome sequence of Escherichia coli K-12.</title>
        <authorList>
            <person name="Blattner F.R."/>
            <person name="Plunkett G. III"/>
            <person name="Bloch C.A."/>
            <person name="Perna N.T."/>
            <person name="Burland V."/>
            <person name="Riley M."/>
            <person name="Collado-Vides J."/>
            <person name="Glasner J.D."/>
            <person name="Rode C.K."/>
            <person name="Mayhew G.F."/>
            <person name="Gregor J."/>
            <person name="Davis N.W."/>
            <person name="Kirkpatrick H.A."/>
            <person name="Goeden M.A."/>
            <person name="Rose D.J."/>
            <person name="Mau B."/>
            <person name="Shao Y."/>
        </authorList>
    </citation>
    <scope>NUCLEOTIDE SEQUENCE [LARGE SCALE GENOMIC DNA]</scope>
    <source>
        <strain>K12 / MG1655 / ATCC 47076</strain>
    </source>
</reference>
<reference key="2">
    <citation type="journal article" date="2017" name="J. Bacteriol.">
        <title>Circuitry linking the global Csr and sigma(E)-dependent cell envelope stress response systems.</title>
        <authorList>
            <person name="Yakhnin H."/>
            <person name="Aichele R."/>
            <person name="Ades S.E."/>
            <person name="Romeo T."/>
            <person name="Babitzke P."/>
        </authorList>
    </citation>
    <scope>IDENTIFICATION</scope>
    <scope>FUNCTION</scope>
    <source>
        <strain>K12 / CF7789</strain>
    </source>
</reference>
<comment type="function">
    <text evidence="1">A short protein whose stop codon overlaps with the start codon of downstream rpoE; a premature stop codon at position 12 results in decreased expression of ECF sigma factor RpoE, thus they are translationally coupled (PubMed:28924029).</text>
</comment>
<gene>
    <name evidence="2" type="primary">rseD</name>
    <name evidence="2" type="synonym">orf51</name>
    <name type="ordered locus">b4725</name>
</gene>
<proteinExistence type="predicted"/>
<feature type="chain" id="PRO_0000442645" description="rpoE leader peptide">
    <location>
        <begin position="1"/>
        <end position="51"/>
    </location>
</feature>
<evidence type="ECO:0000269" key="1">
    <source>
    </source>
</evidence>
<evidence type="ECO:0000303" key="2">
    <source>
    </source>
</evidence>
<keyword id="KW-0428">Leader peptide</keyword>
<keyword id="KW-1185">Reference proteome</keyword>
<keyword id="KW-0810">Translation regulation</keyword>
<accession>P0DPC7</accession>
<accession>A0A385XJM9</accession>
<name>RSED_ECOLI</name>